<keyword id="KW-0539">Nucleus</keyword>
<keyword id="KW-1185">Reference proteome</keyword>
<keyword id="KW-0677">Repeat</keyword>
<keyword id="KW-0694">RNA-binding</keyword>
<gene>
    <name type="ORF">SPBC660.15</name>
</gene>
<feature type="chain" id="PRO_0000310812" description="Uncharacterized RNA-binding protein C660.15">
    <location>
        <begin position="1"/>
        <end position="474"/>
    </location>
</feature>
<feature type="domain" description="RRM 1" evidence="1">
    <location>
        <begin position="163"/>
        <end position="245"/>
    </location>
</feature>
<feature type="domain" description="RRM 2" evidence="1">
    <location>
        <begin position="247"/>
        <end position="324"/>
    </location>
</feature>
<feature type="region of interest" description="Disordered" evidence="2">
    <location>
        <begin position="1"/>
        <end position="163"/>
    </location>
</feature>
<feature type="region of interest" description="Disordered" evidence="2">
    <location>
        <begin position="412"/>
        <end position="474"/>
    </location>
</feature>
<feature type="compositionally biased region" description="Acidic residues" evidence="2">
    <location>
        <begin position="1"/>
        <end position="11"/>
    </location>
</feature>
<feature type="compositionally biased region" description="Basic and acidic residues" evidence="2">
    <location>
        <begin position="12"/>
        <end position="25"/>
    </location>
</feature>
<feature type="compositionally biased region" description="Polar residues" evidence="2">
    <location>
        <begin position="27"/>
        <end position="39"/>
    </location>
</feature>
<feature type="compositionally biased region" description="Basic and acidic residues" evidence="2">
    <location>
        <begin position="40"/>
        <end position="76"/>
    </location>
</feature>
<feature type="compositionally biased region" description="Polar residues" evidence="2">
    <location>
        <begin position="129"/>
        <end position="140"/>
    </location>
</feature>
<feature type="compositionally biased region" description="Low complexity" evidence="2">
    <location>
        <begin position="425"/>
        <end position="434"/>
    </location>
</feature>
<feature type="compositionally biased region" description="Gly residues" evidence="2">
    <location>
        <begin position="435"/>
        <end position="444"/>
    </location>
</feature>
<comment type="subcellular location">
    <subcellularLocation>
        <location evidence="3">Nucleus</location>
    </subcellularLocation>
</comment>
<dbReference type="EMBL" id="CU329671">
    <property type="protein sequence ID" value="CAA22535.1"/>
    <property type="molecule type" value="Genomic_DNA"/>
</dbReference>
<dbReference type="PIR" id="T40627">
    <property type="entry name" value="T40627"/>
</dbReference>
<dbReference type="SMR" id="O94432"/>
<dbReference type="BioGRID" id="277665">
    <property type="interactions" value="11"/>
</dbReference>
<dbReference type="FunCoup" id="O94432">
    <property type="interactions" value="190"/>
</dbReference>
<dbReference type="STRING" id="284812.O94432"/>
<dbReference type="iPTMnet" id="O94432"/>
<dbReference type="PaxDb" id="4896-SPBC660.15.1"/>
<dbReference type="EnsemblFungi" id="SPBC660.15.1">
    <property type="protein sequence ID" value="SPBC660.15.1:pep"/>
    <property type="gene ID" value="SPBC660.15"/>
</dbReference>
<dbReference type="KEGG" id="spo:2541150"/>
<dbReference type="PomBase" id="SPBC660.15"/>
<dbReference type="VEuPathDB" id="FungiDB:SPBC660.15"/>
<dbReference type="eggNOG" id="KOG4205">
    <property type="taxonomic scope" value="Eukaryota"/>
</dbReference>
<dbReference type="HOGENOM" id="CLU_012062_0_3_1"/>
<dbReference type="InParanoid" id="O94432"/>
<dbReference type="OMA" id="QPYITIH"/>
<dbReference type="PhylomeDB" id="O94432"/>
<dbReference type="PRO" id="PR:O94432"/>
<dbReference type="Proteomes" id="UP000002485">
    <property type="component" value="Chromosome II"/>
</dbReference>
<dbReference type="GO" id="GO:0005737">
    <property type="term" value="C:cytoplasm"/>
    <property type="evidence" value="ECO:0000266"/>
    <property type="project" value="PomBase"/>
</dbReference>
<dbReference type="GO" id="GO:0005848">
    <property type="term" value="C:mRNA cleavage stimulating factor complex"/>
    <property type="evidence" value="ECO:0000266"/>
    <property type="project" value="PomBase"/>
</dbReference>
<dbReference type="GO" id="GO:0005634">
    <property type="term" value="C:nucleus"/>
    <property type="evidence" value="ECO:0007005"/>
    <property type="project" value="PomBase"/>
</dbReference>
<dbReference type="GO" id="GO:0003730">
    <property type="term" value="F:mRNA 3'-UTR binding"/>
    <property type="evidence" value="ECO:0000303"/>
    <property type="project" value="PomBase"/>
</dbReference>
<dbReference type="GO" id="GO:0180010">
    <property type="term" value="P:co-transcriptional mRNA 3'-end processing, cleavage and polyadenylation pathway"/>
    <property type="evidence" value="ECO:0000305"/>
    <property type="project" value="PomBase"/>
</dbReference>
<dbReference type="CDD" id="cd12577">
    <property type="entry name" value="RRM1_Hrp1p"/>
    <property type="match status" value="1"/>
</dbReference>
<dbReference type="CDD" id="cd12330">
    <property type="entry name" value="RRM2_Hrp1p"/>
    <property type="match status" value="1"/>
</dbReference>
<dbReference type="FunFam" id="3.30.70.330:FF:000025">
    <property type="entry name" value="RNA-binding protein Musashi homolog 2 isoform X1"/>
    <property type="match status" value="1"/>
</dbReference>
<dbReference type="Gene3D" id="3.30.70.330">
    <property type="match status" value="2"/>
</dbReference>
<dbReference type="InterPro" id="IPR034156">
    <property type="entry name" value="Hrp1_RRM1"/>
</dbReference>
<dbReference type="InterPro" id="IPR012677">
    <property type="entry name" value="Nucleotide-bd_a/b_plait_sf"/>
</dbReference>
<dbReference type="InterPro" id="IPR035979">
    <property type="entry name" value="RBD_domain_sf"/>
</dbReference>
<dbReference type="InterPro" id="IPR000504">
    <property type="entry name" value="RRM_dom"/>
</dbReference>
<dbReference type="PANTHER" id="PTHR48032:SF6">
    <property type="entry name" value="RNA-BINDING (RRM_RBD_RNP MOTIFS) FAMILY PROTEIN"/>
    <property type="match status" value="1"/>
</dbReference>
<dbReference type="PANTHER" id="PTHR48032">
    <property type="entry name" value="RNA-BINDING PROTEIN MUSASHI HOMOLOG RBP6"/>
    <property type="match status" value="1"/>
</dbReference>
<dbReference type="Pfam" id="PF00076">
    <property type="entry name" value="RRM_1"/>
    <property type="match status" value="2"/>
</dbReference>
<dbReference type="SMART" id="SM00360">
    <property type="entry name" value="RRM"/>
    <property type="match status" value="2"/>
</dbReference>
<dbReference type="SUPFAM" id="SSF54928">
    <property type="entry name" value="RNA-binding domain, RBD"/>
    <property type="match status" value="2"/>
</dbReference>
<dbReference type="PROSITE" id="PS50102">
    <property type="entry name" value="RRM"/>
    <property type="match status" value="2"/>
</dbReference>
<proteinExistence type="predicted"/>
<organism>
    <name type="scientific">Schizosaccharomyces pombe (strain 972 / ATCC 24843)</name>
    <name type="common">Fission yeast</name>
    <dbReference type="NCBI Taxonomy" id="284812"/>
    <lineage>
        <taxon>Eukaryota</taxon>
        <taxon>Fungi</taxon>
        <taxon>Dikarya</taxon>
        <taxon>Ascomycota</taxon>
        <taxon>Taphrinomycotina</taxon>
        <taxon>Schizosaccharomycetes</taxon>
        <taxon>Schizosaccharomycetales</taxon>
        <taxon>Schizosaccharomycetaceae</taxon>
        <taxon>Schizosaccharomyces</taxon>
    </lineage>
</organism>
<evidence type="ECO:0000255" key="1">
    <source>
        <dbReference type="PROSITE-ProRule" id="PRU00176"/>
    </source>
</evidence>
<evidence type="ECO:0000256" key="2">
    <source>
        <dbReference type="SAM" id="MobiDB-lite"/>
    </source>
</evidence>
<evidence type="ECO:0000269" key="3">
    <source>
    </source>
</evidence>
<protein>
    <recommendedName>
        <fullName>Uncharacterized RNA-binding protein C660.15</fullName>
    </recommendedName>
</protein>
<name>YHKF_SCHPO</name>
<accession>O94432</accession>
<reference key="1">
    <citation type="journal article" date="2002" name="Nature">
        <title>The genome sequence of Schizosaccharomyces pombe.</title>
        <authorList>
            <person name="Wood V."/>
            <person name="Gwilliam R."/>
            <person name="Rajandream M.A."/>
            <person name="Lyne M.H."/>
            <person name="Lyne R."/>
            <person name="Stewart A."/>
            <person name="Sgouros J.G."/>
            <person name="Peat N."/>
            <person name="Hayles J."/>
            <person name="Baker S.G."/>
            <person name="Basham D."/>
            <person name="Bowman S."/>
            <person name="Brooks K."/>
            <person name="Brown D."/>
            <person name="Brown S."/>
            <person name="Chillingworth T."/>
            <person name="Churcher C.M."/>
            <person name="Collins M."/>
            <person name="Connor R."/>
            <person name="Cronin A."/>
            <person name="Davis P."/>
            <person name="Feltwell T."/>
            <person name="Fraser A."/>
            <person name="Gentles S."/>
            <person name="Goble A."/>
            <person name="Hamlin N."/>
            <person name="Harris D.E."/>
            <person name="Hidalgo J."/>
            <person name="Hodgson G."/>
            <person name="Holroyd S."/>
            <person name="Hornsby T."/>
            <person name="Howarth S."/>
            <person name="Huckle E.J."/>
            <person name="Hunt S."/>
            <person name="Jagels K."/>
            <person name="James K.D."/>
            <person name="Jones L."/>
            <person name="Jones M."/>
            <person name="Leather S."/>
            <person name="McDonald S."/>
            <person name="McLean J."/>
            <person name="Mooney P."/>
            <person name="Moule S."/>
            <person name="Mungall K.L."/>
            <person name="Murphy L.D."/>
            <person name="Niblett D."/>
            <person name="Odell C."/>
            <person name="Oliver K."/>
            <person name="O'Neil S."/>
            <person name="Pearson D."/>
            <person name="Quail M.A."/>
            <person name="Rabbinowitsch E."/>
            <person name="Rutherford K.M."/>
            <person name="Rutter S."/>
            <person name="Saunders D."/>
            <person name="Seeger K."/>
            <person name="Sharp S."/>
            <person name="Skelton J."/>
            <person name="Simmonds M.N."/>
            <person name="Squares R."/>
            <person name="Squares S."/>
            <person name="Stevens K."/>
            <person name="Taylor K."/>
            <person name="Taylor R.G."/>
            <person name="Tivey A."/>
            <person name="Walsh S.V."/>
            <person name="Warren T."/>
            <person name="Whitehead S."/>
            <person name="Woodward J.R."/>
            <person name="Volckaert G."/>
            <person name="Aert R."/>
            <person name="Robben J."/>
            <person name="Grymonprez B."/>
            <person name="Weltjens I."/>
            <person name="Vanstreels E."/>
            <person name="Rieger M."/>
            <person name="Schaefer M."/>
            <person name="Mueller-Auer S."/>
            <person name="Gabel C."/>
            <person name="Fuchs M."/>
            <person name="Duesterhoeft A."/>
            <person name="Fritzc C."/>
            <person name="Holzer E."/>
            <person name="Moestl D."/>
            <person name="Hilbert H."/>
            <person name="Borzym K."/>
            <person name="Langer I."/>
            <person name="Beck A."/>
            <person name="Lehrach H."/>
            <person name="Reinhardt R."/>
            <person name="Pohl T.M."/>
            <person name="Eger P."/>
            <person name="Zimmermann W."/>
            <person name="Wedler H."/>
            <person name="Wambutt R."/>
            <person name="Purnelle B."/>
            <person name="Goffeau A."/>
            <person name="Cadieu E."/>
            <person name="Dreano S."/>
            <person name="Gloux S."/>
            <person name="Lelaure V."/>
            <person name="Mottier S."/>
            <person name="Galibert F."/>
            <person name="Aves S.J."/>
            <person name="Xiang Z."/>
            <person name="Hunt C."/>
            <person name="Moore K."/>
            <person name="Hurst S.M."/>
            <person name="Lucas M."/>
            <person name="Rochet M."/>
            <person name="Gaillardin C."/>
            <person name="Tallada V.A."/>
            <person name="Garzon A."/>
            <person name="Thode G."/>
            <person name="Daga R.R."/>
            <person name="Cruzado L."/>
            <person name="Jimenez J."/>
            <person name="Sanchez M."/>
            <person name="del Rey F."/>
            <person name="Benito J."/>
            <person name="Dominguez A."/>
            <person name="Revuelta J.L."/>
            <person name="Moreno S."/>
            <person name="Armstrong J."/>
            <person name="Forsburg S.L."/>
            <person name="Cerutti L."/>
            <person name="Lowe T."/>
            <person name="McCombie W.R."/>
            <person name="Paulsen I."/>
            <person name="Potashkin J."/>
            <person name="Shpakovski G.V."/>
            <person name="Ussery D."/>
            <person name="Barrell B.G."/>
            <person name="Nurse P."/>
        </authorList>
    </citation>
    <scope>NUCLEOTIDE SEQUENCE [LARGE SCALE GENOMIC DNA]</scope>
    <source>
        <strain>972 / ATCC 24843</strain>
    </source>
</reference>
<reference key="2">
    <citation type="journal article" date="2006" name="Nat. Biotechnol.">
        <title>ORFeome cloning and global analysis of protein localization in the fission yeast Schizosaccharomyces pombe.</title>
        <authorList>
            <person name="Matsuyama A."/>
            <person name="Arai R."/>
            <person name="Yashiroda Y."/>
            <person name="Shirai A."/>
            <person name="Kamata A."/>
            <person name="Sekido S."/>
            <person name="Kobayashi Y."/>
            <person name="Hashimoto A."/>
            <person name="Hamamoto M."/>
            <person name="Hiraoka Y."/>
            <person name="Horinouchi S."/>
            <person name="Yoshida M."/>
        </authorList>
    </citation>
    <scope>SUBCELLULAR LOCATION [LARGE SCALE ANALYSIS]</scope>
</reference>
<sequence length="474" mass="52818">MGGSDFEDDELFKDLYGEENEKKVESASGNQETSNVTPTKENEGYEELEKSGEAGAERTKENPFREEPGADFDRSGSDQQYSAEAEANQEDDLNETSQQAPDPSSYDIRGQALSSATWDNAEDGENSKNDNYNENQSALTGSGAMESNEDNAEETSPFNREDGKMFIGGLNWETTDDSLRDYFEQFGEVLDCTVMRDSTTGRSRGFGFLTFKNPKCVNEVMSKEHHLDGKIIDPKRAIPREEQEKTAKMFVGGVPGDCTEEEFRNFFNQFGRVLDATLMMDKDTGRPRGFGFVTYENESAVEATMSQPYITIHGKPVEVKRATPKASLRDSHDRHQHGYHGNANPYYAQNMNMYGGMTPAMMAQYYRQMQQYMEAMRNMPAAAGAVPYPQPVMPAGMADWQQQQQQGAAYFDPSKMNQGTGDGVPFSPSMPSGSSRGGYHGRNPGGPNRQRYRGRRDGRGGNTGGGHSFHPYRR</sequence>